<evidence type="ECO:0000250" key="1">
    <source>
        <dbReference type="UniProtKB" id="P62500"/>
    </source>
</evidence>
<evidence type="ECO:0000250" key="2">
    <source>
        <dbReference type="UniProtKB" id="P62501"/>
    </source>
</evidence>
<evidence type="ECO:0000250" key="3">
    <source>
        <dbReference type="UniProtKB" id="Q15714"/>
    </source>
</evidence>
<evidence type="ECO:0000256" key="4">
    <source>
        <dbReference type="SAM" id="MobiDB-lite"/>
    </source>
</evidence>
<evidence type="ECO:0000305" key="5"/>
<gene>
    <name evidence="3" type="primary">TSC22D1</name>
    <name evidence="2" type="synonym">TGFB1I4</name>
</gene>
<accession>Q27I66</accession>
<comment type="function">
    <text evidence="1 3">Transcriptional repressor (By similarity). Plays a role in the repression of hematopoietic precursor cell growth (By similarity). Promotes IL2 deprivation-induced apoptosis in T-lymphocytes, via repression of TSC22D3/GILZ transcription and activation of the caspase cascade (By similarity). Positively regulates cell death in response to TGFB3 during mammary gland involution (By similarity).</text>
</comment>
<comment type="subunit">
    <text evidence="1 3">Forms homodimers (By similarity). Forms a heterodimer with TSC22D4/THG1 (By similarity). Interacts with histone H1-2 (By similarity). Interacts with GNL3 (By similarity).</text>
</comment>
<comment type="subcellular location">
    <subcellularLocation>
        <location evidence="1">Cytoplasm</location>
    </subcellularLocation>
    <subcellularLocation>
        <location evidence="1">Nucleus</location>
    </subcellularLocation>
    <subcellularLocation>
        <location evidence="3">Mitochondrion</location>
    </subcellularLocation>
</comment>
<comment type="similarity">
    <text evidence="5">Belongs to the TSC-22/Dip/Bun family.</text>
</comment>
<feature type="chain" id="PRO_0000254946" description="TSC22 domain family protein 1">
    <location>
        <begin position="1"/>
        <end position="144"/>
    </location>
</feature>
<feature type="region of interest" description="Leucine-zipper">
    <location>
        <begin position="77"/>
        <end position="98"/>
    </location>
</feature>
<feature type="region of interest" description="Disordered" evidence="4">
    <location>
        <begin position="109"/>
        <end position="144"/>
    </location>
</feature>
<proteinExistence type="evidence at transcript level"/>
<name>T22D1_BATSU</name>
<reference key="1">
    <citation type="submission" date="2006-02" db="EMBL/GenBank/DDBJ databases">
        <title>Eye development in the Cape dune mole rat.</title>
        <authorList>
            <person name="Nikitina N.V."/>
            <person name="Kidson S.H."/>
        </authorList>
    </citation>
    <scope>NUCLEOTIDE SEQUENCE [MRNA]</scope>
    <source>
        <tissue>Head</tissue>
    </source>
</reference>
<protein>
    <recommendedName>
        <fullName evidence="3">TSC22 domain family protein 1</fullName>
    </recommendedName>
    <alternativeName>
        <fullName evidence="2">Transforming growth factor beta-1-induced transcript 4 protein</fullName>
    </alternativeName>
</protein>
<sequence>MKAQWCRPVAMDLGVYQLRHFSISFLSSLLGTENASVRLDNSSSGASVVAIDNKIEQAMDLVKSHLMYAVREEVEVLKEQIKELIEKNSQLEQENNLLKTLASPEQLAQFQAQLQTGSPPATTQPQGSTQPPAQPASQGSGPTA</sequence>
<organism>
    <name type="scientific">Bathyergus suillus</name>
    <name type="common">Cape dune mole rat</name>
    <dbReference type="NCBI Taxonomy" id="10172"/>
    <lineage>
        <taxon>Eukaryota</taxon>
        <taxon>Metazoa</taxon>
        <taxon>Chordata</taxon>
        <taxon>Craniata</taxon>
        <taxon>Vertebrata</taxon>
        <taxon>Euteleostomi</taxon>
        <taxon>Mammalia</taxon>
        <taxon>Eutheria</taxon>
        <taxon>Euarchontoglires</taxon>
        <taxon>Glires</taxon>
        <taxon>Rodentia</taxon>
        <taxon>Hystricomorpha</taxon>
        <taxon>Bathyergidae</taxon>
        <taxon>Bathyergus</taxon>
    </lineage>
</organism>
<keyword id="KW-0963">Cytoplasm</keyword>
<keyword id="KW-0496">Mitochondrion</keyword>
<keyword id="KW-0539">Nucleus</keyword>
<keyword id="KW-0678">Repressor</keyword>
<keyword id="KW-0804">Transcription</keyword>
<keyword id="KW-0805">Transcription regulation</keyword>
<dbReference type="EMBL" id="DQ400348">
    <property type="protein sequence ID" value="ABD62771.1"/>
    <property type="molecule type" value="mRNA"/>
</dbReference>
<dbReference type="SMR" id="Q27I66"/>
<dbReference type="GO" id="GO:0005737">
    <property type="term" value="C:cytoplasm"/>
    <property type="evidence" value="ECO:0000250"/>
    <property type="project" value="UniProtKB"/>
</dbReference>
<dbReference type="GO" id="GO:0005829">
    <property type="term" value="C:cytosol"/>
    <property type="evidence" value="ECO:0007669"/>
    <property type="project" value="TreeGrafter"/>
</dbReference>
<dbReference type="GO" id="GO:0005739">
    <property type="term" value="C:mitochondrion"/>
    <property type="evidence" value="ECO:0007669"/>
    <property type="project" value="UniProtKB-SubCell"/>
</dbReference>
<dbReference type="GO" id="GO:0005634">
    <property type="term" value="C:nucleus"/>
    <property type="evidence" value="ECO:0007669"/>
    <property type="project" value="UniProtKB-SubCell"/>
</dbReference>
<dbReference type="GO" id="GO:0005886">
    <property type="term" value="C:plasma membrane"/>
    <property type="evidence" value="ECO:0000250"/>
    <property type="project" value="UniProtKB"/>
</dbReference>
<dbReference type="GO" id="GO:0043066">
    <property type="term" value="P:negative regulation of apoptotic process"/>
    <property type="evidence" value="ECO:0007669"/>
    <property type="project" value="TreeGrafter"/>
</dbReference>
<dbReference type="GO" id="GO:1902034">
    <property type="term" value="P:negative regulation of hematopoietic stem cell proliferation"/>
    <property type="evidence" value="ECO:0000250"/>
    <property type="project" value="UniProtKB"/>
</dbReference>
<dbReference type="GO" id="GO:0043065">
    <property type="term" value="P:positive regulation of apoptotic process"/>
    <property type="evidence" value="ECO:0000250"/>
    <property type="project" value="UniProtKB"/>
</dbReference>
<dbReference type="GO" id="GO:0008284">
    <property type="term" value="P:positive regulation of cell population proliferation"/>
    <property type="evidence" value="ECO:0007669"/>
    <property type="project" value="TreeGrafter"/>
</dbReference>
<dbReference type="GO" id="GO:0043068">
    <property type="term" value="P:positive regulation of programmed cell death"/>
    <property type="evidence" value="ECO:0000250"/>
    <property type="project" value="UniProtKB"/>
</dbReference>
<dbReference type="GO" id="GO:0030511">
    <property type="term" value="P:positive regulation of transforming growth factor beta receptor signaling pathway"/>
    <property type="evidence" value="ECO:0000250"/>
    <property type="project" value="UniProtKB"/>
</dbReference>
<dbReference type="GO" id="GO:0006357">
    <property type="term" value="P:regulation of transcription by RNA polymerase II"/>
    <property type="evidence" value="ECO:0007669"/>
    <property type="project" value="InterPro"/>
</dbReference>
<dbReference type="CDD" id="cd21938">
    <property type="entry name" value="ZIP_TSC22D1"/>
    <property type="match status" value="1"/>
</dbReference>
<dbReference type="FunFam" id="1.20.5.490:FF:000002">
    <property type="entry name" value="TSC22 domain family, member 1"/>
    <property type="match status" value="1"/>
</dbReference>
<dbReference type="Gene3D" id="1.20.5.490">
    <property type="entry name" value="Single helix bin"/>
    <property type="match status" value="1"/>
</dbReference>
<dbReference type="InterPro" id="IPR000580">
    <property type="entry name" value="TSC22/Bun"/>
</dbReference>
<dbReference type="InterPro" id="IPR047862">
    <property type="entry name" value="TSC22/BUN_CS"/>
</dbReference>
<dbReference type="PANTHER" id="PTHR46745">
    <property type="entry name" value="TSC22 DOMAIN FAMILY PROTEIN 1"/>
    <property type="match status" value="1"/>
</dbReference>
<dbReference type="PANTHER" id="PTHR46745:SF1">
    <property type="entry name" value="TSC22 DOMAIN FAMILY PROTEIN 1"/>
    <property type="match status" value="1"/>
</dbReference>
<dbReference type="Pfam" id="PF01166">
    <property type="entry name" value="TSC22"/>
    <property type="match status" value="1"/>
</dbReference>
<dbReference type="SUPFAM" id="SSF58026">
    <property type="entry name" value="Delta-sleep-inducing peptide immunoreactive peptide"/>
    <property type="match status" value="1"/>
</dbReference>
<dbReference type="PROSITE" id="PS01289">
    <property type="entry name" value="TSC22"/>
    <property type="match status" value="1"/>
</dbReference>